<protein>
    <recommendedName>
        <fullName>LIM domain and actin-binding protein 1</fullName>
    </recommendedName>
    <alternativeName>
        <fullName>Epithelial protein lost in neoplasm</fullName>
    </alternativeName>
</protein>
<reference key="1">
    <citation type="journal article" date="1999" name="Oncogene">
        <title>EPLIN, epithelial protein lost in neoplasm.</title>
        <authorList>
            <person name="Maul R.S."/>
            <person name="Chang D.D."/>
        </authorList>
    </citation>
    <scope>NUCLEOTIDE SEQUENCE [MRNA] (ISOFORMS ALPHA AND BETA)</scope>
    <scope>SUBCELLULAR LOCATION</scope>
    <source>
        <tissue>Cervix carcinoma</tissue>
    </source>
</reference>
<reference key="2">
    <citation type="journal article" date="2000" name="Proc. Natl. Acad. Sci. U.S.A.">
        <title>Gene expression profiling in the human hypothalamus-pituitary-adrenal axis and full-length cDNA cloning.</title>
        <authorList>
            <person name="Hu R.-M."/>
            <person name="Han Z.-G."/>
            <person name="Song H.-D."/>
            <person name="Peng Y.-D."/>
            <person name="Huang Q.-H."/>
            <person name="Ren S.-X."/>
            <person name="Gu Y.-J."/>
            <person name="Huang C.-H."/>
            <person name="Li Y.-B."/>
            <person name="Jiang C.-L."/>
            <person name="Fu G."/>
            <person name="Zhang Q.-H."/>
            <person name="Gu B.-W."/>
            <person name="Dai M."/>
            <person name="Mao Y.-F."/>
            <person name="Gao G.-F."/>
            <person name="Rong R."/>
            <person name="Ye M."/>
            <person name="Zhou J."/>
            <person name="Xu S.-H."/>
            <person name="Gu J."/>
            <person name="Shi J.-X."/>
            <person name="Jin W.-R."/>
            <person name="Zhang C.-K."/>
            <person name="Wu T.-M."/>
            <person name="Huang G.-Y."/>
            <person name="Chen Z."/>
            <person name="Chen M.-D."/>
            <person name="Chen J.-L."/>
        </authorList>
    </citation>
    <scope>NUCLEOTIDE SEQUENCE [LARGE SCALE MRNA] (ISOFORMS 3 AND 4)</scope>
    <source>
        <tissue>Hypothalamus</tissue>
    </source>
</reference>
<reference key="3">
    <citation type="journal article" date="2001" name="Genome Res.">
        <title>Towards a catalog of human genes and proteins: sequencing and analysis of 500 novel complete protein coding human cDNAs.</title>
        <authorList>
            <person name="Wiemann S."/>
            <person name="Weil B."/>
            <person name="Wellenreuther R."/>
            <person name="Gassenhuber J."/>
            <person name="Glassl S."/>
            <person name="Ansorge W."/>
            <person name="Boecher M."/>
            <person name="Bloecker H."/>
            <person name="Bauersachs S."/>
            <person name="Blum H."/>
            <person name="Lauber J."/>
            <person name="Duesterhoeft A."/>
            <person name="Beyer A."/>
            <person name="Koehrer K."/>
            <person name="Strack N."/>
            <person name="Mewes H.-W."/>
            <person name="Ottenwaelder B."/>
            <person name="Obermaier B."/>
            <person name="Tampe J."/>
            <person name="Heubner D."/>
            <person name="Wambutt R."/>
            <person name="Korn B."/>
            <person name="Klein M."/>
            <person name="Poustka A."/>
        </authorList>
    </citation>
    <scope>NUCLEOTIDE SEQUENCE [LARGE SCALE MRNA] (ISOFORM BETA)</scope>
    <source>
        <tissue>Uterus</tissue>
    </source>
</reference>
<reference key="4">
    <citation type="journal article" date="2004" name="Nat. Genet.">
        <title>Complete sequencing and characterization of 21,243 full-length human cDNAs.</title>
        <authorList>
            <person name="Ota T."/>
            <person name="Suzuki Y."/>
            <person name="Nishikawa T."/>
            <person name="Otsuki T."/>
            <person name="Sugiyama T."/>
            <person name="Irie R."/>
            <person name="Wakamatsu A."/>
            <person name="Hayashi K."/>
            <person name="Sato H."/>
            <person name="Nagai K."/>
            <person name="Kimura K."/>
            <person name="Makita H."/>
            <person name="Sekine M."/>
            <person name="Obayashi M."/>
            <person name="Nishi T."/>
            <person name="Shibahara T."/>
            <person name="Tanaka T."/>
            <person name="Ishii S."/>
            <person name="Yamamoto J."/>
            <person name="Saito K."/>
            <person name="Kawai Y."/>
            <person name="Isono Y."/>
            <person name="Nakamura Y."/>
            <person name="Nagahari K."/>
            <person name="Murakami K."/>
            <person name="Yasuda T."/>
            <person name="Iwayanagi T."/>
            <person name="Wagatsuma M."/>
            <person name="Shiratori A."/>
            <person name="Sudo H."/>
            <person name="Hosoiri T."/>
            <person name="Kaku Y."/>
            <person name="Kodaira H."/>
            <person name="Kondo H."/>
            <person name="Sugawara M."/>
            <person name="Takahashi M."/>
            <person name="Kanda K."/>
            <person name="Yokoi T."/>
            <person name="Furuya T."/>
            <person name="Kikkawa E."/>
            <person name="Omura Y."/>
            <person name="Abe K."/>
            <person name="Kamihara K."/>
            <person name="Katsuta N."/>
            <person name="Sato K."/>
            <person name="Tanikawa M."/>
            <person name="Yamazaki M."/>
            <person name="Ninomiya K."/>
            <person name="Ishibashi T."/>
            <person name="Yamashita H."/>
            <person name="Murakawa K."/>
            <person name="Fujimori K."/>
            <person name="Tanai H."/>
            <person name="Kimata M."/>
            <person name="Watanabe M."/>
            <person name="Hiraoka S."/>
            <person name="Chiba Y."/>
            <person name="Ishida S."/>
            <person name="Ono Y."/>
            <person name="Takiguchi S."/>
            <person name="Watanabe S."/>
            <person name="Yosida M."/>
            <person name="Hotuta T."/>
            <person name="Kusano J."/>
            <person name="Kanehori K."/>
            <person name="Takahashi-Fujii A."/>
            <person name="Hara H."/>
            <person name="Tanase T.-O."/>
            <person name="Nomura Y."/>
            <person name="Togiya S."/>
            <person name="Komai F."/>
            <person name="Hara R."/>
            <person name="Takeuchi K."/>
            <person name="Arita M."/>
            <person name="Imose N."/>
            <person name="Musashino K."/>
            <person name="Yuuki H."/>
            <person name="Oshima A."/>
            <person name="Sasaki N."/>
            <person name="Aotsuka S."/>
            <person name="Yoshikawa Y."/>
            <person name="Matsunawa H."/>
            <person name="Ichihara T."/>
            <person name="Shiohata N."/>
            <person name="Sano S."/>
            <person name="Moriya S."/>
            <person name="Momiyama H."/>
            <person name="Satoh N."/>
            <person name="Takami S."/>
            <person name="Terashima Y."/>
            <person name="Suzuki O."/>
            <person name="Nakagawa S."/>
            <person name="Senoh A."/>
            <person name="Mizoguchi H."/>
            <person name="Goto Y."/>
            <person name="Shimizu F."/>
            <person name="Wakebe H."/>
            <person name="Hishigaki H."/>
            <person name="Watanabe T."/>
            <person name="Sugiyama A."/>
            <person name="Takemoto M."/>
            <person name="Kawakami B."/>
            <person name="Yamazaki M."/>
            <person name="Watanabe K."/>
            <person name="Kumagai A."/>
            <person name="Itakura S."/>
            <person name="Fukuzumi Y."/>
            <person name="Fujimori Y."/>
            <person name="Komiyama M."/>
            <person name="Tashiro H."/>
            <person name="Tanigami A."/>
            <person name="Fujiwara T."/>
            <person name="Ono T."/>
            <person name="Yamada K."/>
            <person name="Fujii Y."/>
            <person name="Ozaki K."/>
            <person name="Hirao M."/>
            <person name="Ohmori Y."/>
            <person name="Kawabata A."/>
            <person name="Hikiji T."/>
            <person name="Kobatake N."/>
            <person name="Inagaki H."/>
            <person name="Ikema Y."/>
            <person name="Okamoto S."/>
            <person name="Okitani R."/>
            <person name="Kawakami T."/>
            <person name="Noguchi S."/>
            <person name="Itoh T."/>
            <person name="Shigeta K."/>
            <person name="Senba T."/>
            <person name="Matsumura K."/>
            <person name="Nakajima Y."/>
            <person name="Mizuno T."/>
            <person name="Morinaga M."/>
            <person name="Sasaki M."/>
            <person name="Togashi T."/>
            <person name="Oyama M."/>
            <person name="Hata H."/>
            <person name="Watanabe M."/>
            <person name="Komatsu T."/>
            <person name="Mizushima-Sugano J."/>
            <person name="Satoh T."/>
            <person name="Shirai Y."/>
            <person name="Takahashi Y."/>
            <person name="Nakagawa K."/>
            <person name="Okumura K."/>
            <person name="Nagase T."/>
            <person name="Nomura N."/>
            <person name="Kikuchi H."/>
            <person name="Masuho Y."/>
            <person name="Yamashita R."/>
            <person name="Nakai K."/>
            <person name="Yada T."/>
            <person name="Nakamura Y."/>
            <person name="Ohara O."/>
            <person name="Isogai T."/>
            <person name="Sugano S."/>
        </authorList>
    </citation>
    <scope>NUCLEOTIDE SEQUENCE [LARGE SCALE MRNA] (ISOFORMS ALPHA; BETA AND 3)</scope>
    <source>
        <tissue>Colon</tissue>
        <tissue>Hepatoma</tissue>
        <tissue>Placenta</tissue>
    </source>
</reference>
<reference key="5">
    <citation type="submission" date="2005-03" db="EMBL/GenBank/DDBJ databases">
        <title>Homo sapiens protein coding cDNA.</title>
        <authorList>
            <person name="Totoki Y."/>
            <person name="Toyoda A."/>
            <person name="Takeda T."/>
            <person name="Sakaki Y."/>
            <person name="Tanaka A."/>
            <person name="Yokoyama S."/>
            <person name="Ohara O."/>
            <person name="Nagase T."/>
            <person name="Kikuno R.F."/>
        </authorList>
    </citation>
    <scope>NUCLEOTIDE SEQUENCE [LARGE SCALE MRNA] (ISOFORM 4)</scope>
    <source>
        <tissue>Brain</tissue>
    </source>
</reference>
<reference key="6">
    <citation type="submission" date="2005-09" db="EMBL/GenBank/DDBJ databases">
        <authorList>
            <person name="Mural R.J."/>
            <person name="Istrail S."/>
            <person name="Sutton G.G."/>
            <person name="Florea L."/>
            <person name="Halpern A.L."/>
            <person name="Mobarry C.M."/>
            <person name="Lippert R."/>
            <person name="Walenz B."/>
            <person name="Shatkay H."/>
            <person name="Dew I."/>
            <person name="Miller J.R."/>
            <person name="Flanigan M.J."/>
            <person name="Edwards N.J."/>
            <person name="Bolanos R."/>
            <person name="Fasulo D."/>
            <person name="Halldorsson B.V."/>
            <person name="Hannenhalli S."/>
            <person name="Turner R."/>
            <person name="Yooseph S."/>
            <person name="Lu F."/>
            <person name="Nusskern D.R."/>
            <person name="Shue B.C."/>
            <person name="Zheng X.H."/>
            <person name="Zhong F."/>
            <person name="Delcher A.L."/>
            <person name="Huson D.H."/>
            <person name="Kravitz S.A."/>
            <person name="Mouchard L."/>
            <person name="Reinert K."/>
            <person name="Remington K.A."/>
            <person name="Clark A.G."/>
            <person name="Waterman M.S."/>
            <person name="Eichler E.E."/>
            <person name="Adams M.D."/>
            <person name="Hunkapiller M.W."/>
            <person name="Myers E.W."/>
            <person name="Venter J.C."/>
        </authorList>
    </citation>
    <scope>NUCLEOTIDE SEQUENCE [LARGE SCALE GENOMIC DNA]</scope>
</reference>
<reference key="7">
    <citation type="journal article" date="2004" name="Genome Res.">
        <title>The status, quality, and expansion of the NIH full-length cDNA project: the Mammalian Gene Collection (MGC).</title>
        <authorList>
            <consortium name="The MGC Project Team"/>
        </authorList>
    </citation>
    <scope>NUCLEOTIDE SEQUENCE [LARGE SCALE MRNA] (ISOFORM BETA)</scope>
    <source>
        <tissue>Brain</tissue>
        <tissue>Cervix</tissue>
        <tissue>Colon</tissue>
        <tissue>Placenta</tissue>
    </source>
</reference>
<reference key="8">
    <citation type="journal article" date="2004" name="Proc. Natl. Acad. Sci. U.S.A.">
        <title>Large-scale cDNA transfection screening for genes related to cancer development and progression.</title>
        <authorList>
            <person name="Wan D."/>
            <person name="Gong Y."/>
            <person name="Qin W."/>
            <person name="Zhang P."/>
            <person name="Li J."/>
            <person name="Wei L."/>
            <person name="Zhou X."/>
            <person name="Li H."/>
            <person name="Qiu X."/>
            <person name="Zhong F."/>
            <person name="He L."/>
            <person name="Yu J."/>
            <person name="Yao G."/>
            <person name="Jiang H."/>
            <person name="Qian L."/>
            <person name="Yu Y."/>
            <person name="Shu H."/>
            <person name="Chen X."/>
            <person name="Xu H."/>
            <person name="Guo M."/>
            <person name="Pan Z."/>
            <person name="Chen Y."/>
            <person name="Ge C."/>
            <person name="Yang S."/>
            <person name="Gu J."/>
        </authorList>
    </citation>
    <scope>NUCLEOTIDE SEQUENCE [LARGE SCALE MRNA] OF 232-759</scope>
</reference>
<reference key="9">
    <citation type="journal article" date="2000" name="EMBO Rep.">
        <title>Systematic subcellular localization of novel proteins identified by large-scale cDNA sequencing.</title>
        <authorList>
            <person name="Simpson J.C."/>
            <person name="Wellenreuther R."/>
            <person name="Poustka A."/>
            <person name="Pepperkok R."/>
            <person name="Wiemann S."/>
        </authorList>
    </citation>
    <scope>SUBCELLULAR LOCATION</scope>
</reference>
<reference key="10">
    <citation type="journal article" date="2000" name="Gene">
        <title>Characterization of the human EPLIN (Epithelial protein lost in neoplasm) gene reveals distinct promoters for the two EPLIN isoforms.</title>
        <authorList>
            <person name="Chen S."/>
            <person name="Maul R.S."/>
            <person name="Kim H.R."/>
            <person name="Chang D.D."/>
        </authorList>
    </citation>
    <scope>ALTERNATIVE PROMOTER USAGE</scope>
    <scope>INDUCTION</scope>
</reference>
<reference key="11">
    <citation type="journal article" date="2003" name="J. Cell Biol.">
        <title>EPLIN regulates actin dynamics by cross-linking and stabilizing filaments.</title>
        <authorList>
            <person name="Maul R.S."/>
            <person name="Song Y."/>
            <person name="Amann K.J."/>
            <person name="Gerbin S.C."/>
            <person name="Pollard T.D."/>
            <person name="Chang D.D."/>
        </authorList>
    </citation>
    <scope>FUNCTION</scope>
    <scope>ACTIN-BINDING REGION</scope>
</reference>
<reference key="12">
    <citation type="journal article" date="2006" name="Cell">
        <title>Global, in vivo, and site-specific phosphorylation dynamics in signaling networks.</title>
        <authorList>
            <person name="Olsen J.V."/>
            <person name="Blagoev B."/>
            <person name="Gnad F."/>
            <person name="Macek B."/>
            <person name="Kumar C."/>
            <person name="Mortensen P."/>
            <person name="Mann M."/>
        </authorList>
    </citation>
    <scope>PHOSPHORYLATION [LARGE SCALE ANALYSIS] AT SER-362; SER-490; SER-686 AND SER-692</scope>
    <scope>IDENTIFICATION BY MASS SPECTROMETRY [LARGE SCALE ANALYSIS]</scope>
    <source>
        <tissue>Cervix carcinoma</tissue>
    </source>
</reference>
<reference key="13">
    <citation type="journal article" date="2007" name="J. Proteome Res.">
        <title>Improved titanium dioxide enrichment of phosphopeptides from HeLa cells and high confident phosphopeptide identification by cross-validation of MS/MS and MS/MS/MS spectra.</title>
        <authorList>
            <person name="Yu L.R."/>
            <person name="Zhu Z."/>
            <person name="Chan K.C."/>
            <person name="Issaq H.J."/>
            <person name="Dimitrov D.S."/>
            <person name="Veenstra T.D."/>
        </authorList>
    </citation>
    <scope>PHOSPHORYLATION [LARGE SCALE ANALYSIS] AT SER-132; SER-362 AND SER-490</scope>
    <scope>IDENTIFICATION BY MASS SPECTROMETRY [LARGE SCALE ANALYSIS]</scope>
    <source>
        <tissue>Cervix carcinoma</tissue>
    </source>
</reference>
<reference key="14">
    <citation type="journal article" date="2008" name="J. Proteome Res.">
        <title>Phosphoproteome of resting human platelets.</title>
        <authorList>
            <person name="Zahedi R.P."/>
            <person name="Lewandrowski U."/>
            <person name="Wiesner J."/>
            <person name="Wortelkamp S."/>
            <person name="Moebius J."/>
            <person name="Schuetz C."/>
            <person name="Walter U."/>
            <person name="Gambaryan S."/>
            <person name="Sickmann A."/>
        </authorList>
    </citation>
    <scope>PHOSPHORYLATION [LARGE SCALE ANALYSIS] AT SER-490</scope>
    <scope>IDENTIFICATION BY MASS SPECTROMETRY [LARGE SCALE ANALYSIS]</scope>
    <source>
        <tissue>Platelet</tissue>
    </source>
</reference>
<reference key="15">
    <citation type="journal article" date="2008" name="Mol. Cell">
        <title>Kinase-selective enrichment enables quantitative phosphoproteomics of the kinome across the cell cycle.</title>
        <authorList>
            <person name="Daub H."/>
            <person name="Olsen J.V."/>
            <person name="Bairlein M."/>
            <person name="Gnad F."/>
            <person name="Oppermann F.S."/>
            <person name="Korner R."/>
            <person name="Greff Z."/>
            <person name="Keri G."/>
            <person name="Stemmann O."/>
            <person name="Mann M."/>
        </authorList>
    </citation>
    <scope>PHOSPHORYLATION [LARGE SCALE ANALYSIS] AT SER-490; SER-686 AND SER-692</scope>
    <scope>IDENTIFICATION BY MASS SPECTROMETRY [LARGE SCALE ANALYSIS]</scope>
    <source>
        <tissue>Cervix carcinoma</tissue>
    </source>
</reference>
<reference key="16">
    <citation type="journal article" date="2008" name="Proc. Natl. Acad. Sci. U.S.A.">
        <title>A quantitative atlas of mitotic phosphorylation.</title>
        <authorList>
            <person name="Dephoure N."/>
            <person name="Zhou C."/>
            <person name="Villen J."/>
            <person name="Beausoleil S.A."/>
            <person name="Bakalarski C.E."/>
            <person name="Elledge S.J."/>
            <person name="Gygi S.P."/>
        </authorList>
    </citation>
    <scope>PHOSPHORYLATION [LARGE SCALE ANALYSIS] AT SER-15; SER-225; TYR-229; SER-362; SER-374; SER-490; SER-604; SER-609; SER-617; SER-686; SER-692 AND SER-698</scope>
    <scope>IDENTIFICATION BY MASS SPECTROMETRY [LARGE SCALE ANALYSIS]</scope>
    <source>
        <tissue>Cervix carcinoma</tissue>
    </source>
</reference>
<reference key="17">
    <citation type="journal article" date="2009" name="Anal. Chem.">
        <title>Lys-N and trypsin cover complementary parts of the phosphoproteome in a refined SCX-based approach.</title>
        <authorList>
            <person name="Gauci S."/>
            <person name="Helbig A.O."/>
            <person name="Slijper M."/>
            <person name="Krijgsveld J."/>
            <person name="Heck A.J."/>
            <person name="Mohammed S."/>
        </authorList>
    </citation>
    <scope>IDENTIFICATION BY MASS SPECTROMETRY [LARGE SCALE ANALYSIS]</scope>
</reference>
<reference key="18">
    <citation type="journal article" date="2009" name="Sci. Signal.">
        <title>Quantitative phosphoproteomic analysis of T cell receptor signaling reveals system-wide modulation of protein-protein interactions.</title>
        <authorList>
            <person name="Mayya V."/>
            <person name="Lundgren D.H."/>
            <person name="Hwang S.-I."/>
            <person name="Rezaul K."/>
            <person name="Wu L."/>
            <person name="Eng J.K."/>
            <person name="Rodionov V."/>
            <person name="Han D.K."/>
        </authorList>
    </citation>
    <scope>PHOSPHORYLATION [LARGE SCALE ANALYSIS] AT SER-604; SER-617 AND SER-686</scope>
    <scope>IDENTIFICATION BY MASS SPECTROMETRY [LARGE SCALE ANALYSIS]</scope>
    <source>
        <tissue>Leukemic T-cell</tissue>
    </source>
</reference>
<reference key="19">
    <citation type="journal article" date="2010" name="Sci. Signal.">
        <title>Quantitative phosphoproteomics reveals widespread full phosphorylation site occupancy during mitosis.</title>
        <authorList>
            <person name="Olsen J.V."/>
            <person name="Vermeulen M."/>
            <person name="Santamaria A."/>
            <person name="Kumar C."/>
            <person name="Miller M.L."/>
            <person name="Jensen L.J."/>
            <person name="Gnad F."/>
            <person name="Cox J."/>
            <person name="Jensen T.S."/>
            <person name="Nigg E.A."/>
            <person name="Brunak S."/>
            <person name="Mann M."/>
        </authorList>
    </citation>
    <scope>ACETYLATION [LARGE SCALE ANALYSIS] AT MET-1</scope>
    <scope>PHOSPHORYLATION [LARGE SCALE ANALYSIS] AT SER-4; SER-132; SER-225; SER-263; SER-343; SER-362; SER-374; SER-490; SER-604; SER-686 AND SER-692</scope>
    <scope>PHOSPHORYLATION [LARGE SCALE ANALYSIS] AT SER-343 (ISOFORM 4)</scope>
    <scope>PHOSPHORYLATION [LARGE SCALE ANALYSIS] AT SER-183 (ISOFORM 5)</scope>
    <scope>IDENTIFICATION BY MASS SPECTROMETRY [LARGE SCALE ANALYSIS]</scope>
    <source>
        <tissue>Cervix carcinoma</tissue>
    </source>
</reference>
<reference key="20">
    <citation type="journal article" date="2011" name="BMC Syst. Biol.">
        <title>Initial characterization of the human central proteome.</title>
        <authorList>
            <person name="Burkard T.R."/>
            <person name="Planyavsky M."/>
            <person name="Kaupe I."/>
            <person name="Breitwieser F.P."/>
            <person name="Buerckstuemmer T."/>
            <person name="Bennett K.L."/>
            <person name="Superti-Furga G."/>
            <person name="Colinge J."/>
        </authorList>
    </citation>
    <scope>IDENTIFICATION BY MASS SPECTROMETRY [LARGE SCALE ANALYSIS]</scope>
</reference>
<reference key="21">
    <citation type="journal article" date="2011" name="Sci. Signal.">
        <title>System-wide temporal characterization of the proteome and phosphoproteome of human embryonic stem cell differentiation.</title>
        <authorList>
            <person name="Rigbolt K.T."/>
            <person name="Prokhorova T.A."/>
            <person name="Akimov V."/>
            <person name="Henningsen J."/>
            <person name="Johansen P.T."/>
            <person name="Kratchmarova I."/>
            <person name="Kassem M."/>
            <person name="Mann M."/>
            <person name="Olsen J.V."/>
            <person name="Blagoev B."/>
        </authorList>
    </citation>
    <scope>PHOSPHORYLATION [LARGE SCALE ANALYSIS] AT SER-132; SER-350; SER-362; SER-365; SER-369; SER-374; SER-490; SER-686; SER-698 AND SER-726</scope>
    <scope>IDENTIFICATION BY MASS SPECTROMETRY [LARGE SCALE ANALYSIS]</scope>
</reference>
<reference key="22">
    <citation type="journal article" date="2012" name="Proc. Natl. Acad. Sci. U.S.A.">
        <title>N-terminal acetylome analyses and functional insights of the N-terminal acetyltransferase NatB.</title>
        <authorList>
            <person name="Van Damme P."/>
            <person name="Lasa M."/>
            <person name="Polevoda B."/>
            <person name="Gazquez C."/>
            <person name="Elosegui-Artola A."/>
            <person name="Kim D.S."/>
            <person name="De Juan-Pardo E."/>
            <person name="Demeyer K."/>
            <person name="Hole K."/>
            <person name="Larrea E."/>
            <person name="Timmerman E."/>
            <person name="Prieto J."/>
            <person name="Arnesen T."/>
            <person name="Sherman F."/>
            <person name="Gevaert K."/>
            <person name="Aldabe R."/>
        </authorList>
    </citation>
    <scope>ACETYLATION [LARGE SCALE ANALYSIS] AT MET-1 (ISOFORMS 5 AND ALPHA)</scope>
    <scope>IDENTIFICATION BY MASS SPECTROMETRY [LARGE SCALE ANALYSIS]</scope>
</reference>
<reference key="23">
    <citation type="journal article" date="2013" name="J. Proteome Res.">
        <title>Toward a comprehensive characterization of a human cancer cell phosphoproteome.</title>
        <authorList>
            <person name="Zhou H."/>
            <person name="Di Palma S."/>
            <person name="Preisinger C."/>
            <person name="Peng M."/>
            <person name="Polat A.N."/>
            <person name="Heck A.J."/>
            <person name="Mohammed S."/>
        </authorList>
    </citation>
    <scope>PHOSPHORYLATION [LARGE SCALE ANALYSIS] AT SER-4; SER-15; SER-55; SER-132; SER-263; SER-362; SER-374; SER-490; SER-601; SER-604; SER-609; SER-617 AND SER-686</scope>
    <scope>IDENTIFICATION BY MASS SPECTROMETRY [LARGE SCALE ANALYSIS]</scope>
    <source>
        <tissue>Cervix carcinoma</tissue>
        <tissue>Erythroleukemia</tissue>
    </source>
</reference>
<reference key="24">
    <citation type="journal article" date="2014" name="J. Proteomics">
        <title>An enzyme assisted RP-RPLC approach for in-depth analysis of human liver phosphoproteome.</title>
        <authorList>
            <person name="Bian Y."/>
            <person name="Song C."/>
            <person name="Cheng K."/>
            <person name="Dong M."/>
            <person name="Wang F."/>
            <person name="Huang J."/>
            <person name="Sun D."/>
            <person name="Wang L."/>
            <person name="Ye M."/>
            <person name="Zou H."/>
        </authorList>
    </citation>
    <scope>PHOSPHORYLATION [LARGE SCALE ANALYSIS] AT SER-225; SER-362; SER-365; SER-374 AND SER-490</scope>
    <scope>IDENTIFICATION BY MASS SPECTROMETRY [LARGE SCALE ANALYSIS]</scope>
    <source>
        <tissue>Liver</tissue>
    </source>
</reference>
<reference key="25">
    <citation type="journal article" date="2014" name="Kidney Int.">
        <title>Epithelial protein lost in neoplasm modulates platelet-derived growth factor-mediated adhesion and motility of mesangial cells.</title>
        <authorList>
            <person name="Tsurumi H."/>
            <person name="Harita Y."/>
            <person name="Kurihara H."/>
            <person name="Kosako H."/>
            <person name="Hayashi K."/>
            <person name="Matsunaga A."/>
            <person name="Kajiho Y."/>
            <person name="Kanda S."/>
            <person name="Miura K."/>
            <person name="Sekine T."/>
            <person name="Oka A."/>
            <person name="Ishizuka K."/>
            <person name="Horita S."/>
            <person name="Hattori M."/>
            <person name="Hattori S."/>
            <person name="Igarashi T."/>
        </authorList>
    </citation>
    <scope>TISSUE SPECIFICITY</scope>
    <scope>SUBCELLULAR LOCATION</scope>
    <scope>INTERACTION WITH PXN</scope>
</reference>
<reference key="26">
    <citation type="journal article" date="2020" name="J. Cell Biol.">
        <title>LUZP1 and the tumor suppressor EPLIN modulate actin stability to restrict primary cilia formation.</title>
        <authorList>
            <person name="Goncalves J."/>
            <person name="Sharma A."/>
            <person name="Coyaud E."/>
            <person name="Laurent E.M.N."/>
            <person name="Raught B."/>
            <person name="Pelletier L."/>
        </authorList>
    </citation>
    <scope>FUNCTION</scope>
    <scope>INTERACTION WITH LUZP1</scope>
    <scope>SUBCELLULAR LOCATION</scope>
</reference>
<reference key="27">
    <citation type="journal article" date="2021" name="J. Cell Biol.">
        <title>Rab40-Cullin5 complex regulates EPLIN and actin cytoskeleton dynamics during cell migration.</title>
        <authorList>
            <person name="Linklater E.S."/>
            <person name="Duncan E.D."/>
            <person name="Han K.J."/>
            <person name="Kaupinis A."/>
            <person name="Valius M."/>
            <person name="Lyons T.R."/>
            <person name="Prekeris R."/>
        </authorList>
    </citation>
    <scope>FUNCTION</scope>
    <scope>INTERACTION WITH RAB40B</scope>
    <scope>UBIQUITINATION</scope>
    <scope>SUBCELLULAR LOCATION</scope>
</reference>
<reference key="28">
    <citation type="journal article" date="2018" name="Science">
        <title>A LIMA1 variant promotes low plasma LDL cholesterol and decreases intestinal cholesterol absorption.</title>
        <authorList>
            <person name="Zhang Y.Y."/>
            <person name="Fu Z.Y."/>
            <person name="Wei J."/>
            <person name="Qi W."/>
            <person name="Baituola G."/>
            <person name="Luo J."/>
            <person name="Meng Y.J."/>
            <person name="Guo S.Y."/>
            <person name="Yin H."/>
            <person name="Jiang S.Y."/>
            <person name="Li Y.F."/>
            <person name="Miao H.H."/>
            <person name="Liu Y."/>
            <person name="Wang Y."/>
            <person name="Li B.L."/>
            <person name="Ma Y.T."/>
            <person name="Song B.L."/>
        </authorList>
    </citation>
    <scope>VARIANT ILE-25</scope>
    <scope>CHARACTERIZATION OF VARIANT ILE-25</scope>
    <scope>INTERACTION WITH NPCL1</scope>
    <scope>POLYMORPHISM</scope>
</reference>
<reference key="29">
    <citation type="submission" date="2006-06" db="PDB data bank">
        <title>Solution structure of the LIM domain of epithelial protein lost in neoplasm.</title>
        <authorList>
            <consortium name="RIKEN structural genomics initiative (RSGI)"/>
        </authorList>
    </citation>
    <scope>STRUCTURE BY NMR OF 381-460</scope>
</reference>
<organism>
    <name type="scientific">Homo sapiens</name>
    <name type="common">Human</name>
    <dbReference type="NCBI Taxonomy" id="9606"/>
    <lineage>
        <taxon>Eukaryota</taxon>
        <taxon>Metazoa</taxon>
        <taxon>Chordata</taxon>
        <taxon>Craniata</taxon>
        <taxon>Vertebrata</taxon>
        <taxon>Euteleostomi</taxon>
        <taxon>Mammalia</taxon>
        <taxon>Eutheria</taxon>
        <taxon>Euarchontoglires</taxon>
        <taxon>Primates</taxon>
        <taxon>Haplorrhini</taxon>
        <taxon>Catarrhini</taxon>
        <taxon>Hominidae</taxon>
        <taxon>Homo</taxon>
    </lineage>
</organism>
<comment type="function">
    <text evidence="1 6 9 10">Actin-binding protein involved in actin cytoskeleton regulation and dynamics. Increases the number and size of actin stress fibers and inhibits membrane ruffling. Inhibits actin filament depolymerization. Bundles actin filaments, delays filament nucleation and reduces formation of branched filaments (PubMed:12566430, PubMed:33999101). Acts as a negative regulator of primary cilium formation (PubMed:32496561). Plays a role in cholesterol homeostasis. Influences plasma cholesterol levels through regulation of intestinal cholesterol absorption. May act as a scaffold protein by regulating NPC1L1 transportation, an essential protein for cholesterol absorption, to the plasma membrane by recruiting MYO5B to NPC1L1, and thus facilitates cholesterol uptake (By similarity).</text>
</comment>
<comment type="subunit">
    <text evidence="6 7 8 9 10">Interacts with NPC1L1; bridges NPC1L1 with MYO5B (PubMed:29880681). Interacts with MYO5B; bridges NPC1L1 with MYO5B (PubMed:29880681). Interacts with PXN; this complex stabilizes actin dynamics (PubMed:24694988). Interacts with F-actin and G-actin (PubMed:12566430). Interacts with LUZP1 (via C-terminus); both proteins restrict ciliation and may work together to regulate this process (PubMed:32496561). Binds RAB40B (GTP-bound); interaction influences LIMA1 subcellular localization in lamellipodia during cell migration (PubMed:33999101).</text>
</comment>
<comment type="interaction">
    <interactant intactId="EBI-351479">
        <id>Q9UHB6</id>
    </interactant>
    <interactant intactId="EBI-727477">
        <id>P12830</id>
        <label>CDH1</label>
    </interactant>
    <organismsDiffer>false</organismsDiffer>
    <experiments>2</experiments>
</comment>
<comment type="interaction">
    <interactant intactId="EBI-351479">
        <id>Q9UHB6</id>
    </interactant>
    <interactant intactId="EBI-701918">
        <id>P35221</id>
        <label>CTNNA1</label>
    </interactant>
    <organismsDiffer>false</organismsDiffer>
    <experiments>2</experiments>
</comment>
<comment type="interaction">
    <interactant intactId="EBI-351479">
        <id>Q9UHB6</id>
    </interactant>
    <interactant intactId="EBI-358616">
        <id>P53355</id>
        <label>DAPK1</label>
    </interactant>
    <organismsDiffer>false</organismsDiffer>
    <experiments>2</experiments>
</comment>
<comment type="interaction">
    <interactant intactId="EBI-351479">
        <id>Q9UHB6</id>
    </interactant>
    <interactant intactId="EBI-347088">
        <id>P63104</id>
        <label>YWHAZ</label>
    </interactant>
    <organismsDiffer>false</organismsDiffer>
    <experiments>2</experiments>
</comment>
<comment type="interaction">
    <interactant intactId="EBI-351479">
        <id>Q9UHB6</id>
    </interactant>
    <interactant intactId="EBI-6995105">
        <id>O46385</id>
        <label>SVIL</label>
    </interactant>
    <organismsDiffer>true</organismsDiffer>
    <experiments>3</experiments>
</comment>
<comment type="subcellular location">
    <subcellularLocation>
        <location>Cytoplasm</location>
    </subcellularLocation>
    <subcellularLocation>
        <location evidence="4 7">Cell junction</location>
        <location evidence="4 7">Focal adhesion</location>
    </subcellularLocation>
    <subcellularLocation>
        <location>Cytoplasm</location>
        <location>Cytoskeleton</location>
    </subcellularLocation>
    <subcellularLocation>
        <location evidence="4">Cytoplasm</location>
        <location evidence="4">Cytoskeleton</location>
        <location evidence="4">Stress fiber</location>
    </subcellularLocation>
    <subcellularLocation>
        <location evidence="1">Cell membrane</location>
    </subcellularLocation>
    <subcellularLocation>
        <location evidence="9 10">Cell projection</location>
        <location evidence="9 10">Ruffle</location>
    </subcellularLocation>
    <subcellularLocation>
        <location evidence="10">Cell projection</location>
        <location evidence="10">Lamellipodium</location>
    </subcellularLocation>
    <text evidence="1 7 8 10">Expressed in the brush border membrane of the small intestine and colocalizes with NPC1L1 and MYO5B (PubMed:29880681). Colocalizes with PXN at focal adhesions in mesangial cells (PubMed:24694988). Colocalizes with actin stress fibers in quiescent cells. PDGF stimulation induced disassembly of stress fibers and formation of peripheral and dorsal ruffles, where LIMA1 is relocalized (By similarity). Localized at the lamellipodia, just behind lamellipodia actin ruffles (PubMed:33999101).</text>
</comment>
<comment type="alternative products">
    <event type="alternative promoter"/>
    <event type="alternative splicing"/>
    <isoform>
        <id>Q9UHB6-1</id>
        <name>Beta</name>
        <sequence type="displayed"/>
    </isoform>
    <isoform>
        <id>Q9UHB6-2</id>
        <name>Alpha</name>
        <sequence type="described" ref="VSP_003116"/>
    </isoform>
    <isoform>
        <id>Q9UHB6-3</id>
        <name>3</name>
        <sequence type="described" ref="VSP_003117"/>
    </isoform>
    <isoform>
        <id>Q9UHB6-4</id>
        <name>4</name>
        <sequence type="described" ref="VSP_040136"/>
    </isoform>
    <isoform>
        <id>Q9UHB6-5</id>
        <name>5</name>
        <sequence type="described" ref="VSP_003116 VSP_040136"/>
    </isoform>
</comment>
<comment type="tissue specificity">
    <text evidence="7">Highly expressed in placenta, kidney, pancreas, prostate, ovary, spleen and heart. Also detected in lung, liver, brain, skeletal muscle, thymus, testis and intestine. Not detected in leukocytes. Isoform Beta expressed generally at very low levels. Isoform Alpha abundant in epithelial cells from mammary gland, prostate and in normal oral keratinocytes. Low levels in aortic endothelial cells and dermal fibroblasts. Not detectable in myocardium.</text>
</comment>
<comment type="induction">
    <text evidence="5">Down-regulated in some cancer cell lines. Isoform Alpha is induced by serum. Isoform Beta is constitutively expressed.</text>
</comment>
<comment type="domain">
    <text evidence="6">Contains at least 2 actin-binding domains, one on each side of the LIM domain. Both domains bind actin monomers and filaments. The C-terminal domain binds filaments more efficiently than the N-terminus.</text>
</comment>
<comment type="PTM">
    <text evidence="10">Ubiquitinated by the ECS(RAB40B) complex leading to its degradation.</text>
</comment>
<comment type="PTM">
    <text evidence="1">Phosphorylation of the C-terminal region by MAPK1/MAPK3 reduces its association with F-actin and contributes to actin filament reorganization and enhances cell motility.</text>
</comment>
<comment type="polymorphism">
    <text evidence="8">Genetic variations in LIMA1 influence low density lipoprotein cholesterol (LDL-C) variability and contribute to the low density lipoprotein cholesterol level quantitative trait locus 8 (LDLCQ8) [MIM:618079].</text>
</comment>
<comment type="miscellaneous">
    <molecule>Isoform Beta</molecule>
    <text>Produced by alternative promoter usage.</text>
</comment>
<comment type="miscellaneous">
    <molecule>Isoform Alpha</molecule>
    <text evidence="15">Produced by alternative promoter usage.</text>
</comment>
<comment type="miscellaneous">
    <molecule>Isoform 3</molecule>
    <text evidence="15">Produced by alternative splicing of isoform Beta.</text>
</comment>
<comment type="miscellaneous">
    <molecule>Isoform 4</molecule>
    <text evidence="15">Produced by alternative splicing.</text>
</comment>
<comment type="sequence caution" evidence="15">
    <conflict type="frameshift">
        <sequence resource="EMBL-CDS" id="AAG17267"/>
    </conflict>
</comment>
<comment type="sequence caution" evidence="15">
    <conflict type="frameshift">
        <sequence resource="EMBL-CDS" id="BAA91120"/>
    </conflict>
</comment>
<comment type="sequence caution" evidence="15">
    <conflict type="erroneous initiation">
        <sequence resource="EMBL-CDS" id="BAD92749"/>
    </conflict>
    <text>Extended N-terminus.</text>
</comment>
<gene>
    <name evidence="16" type="primary">LIMA1</name>
    <name evidence="11" type="synonym">EPLIN</name>
    <name type="synonym">SREBP3</name>
    <name type="ORF">PP624</name>
</gene>
<keyword id="KW-0002">3D-structure</keyword>
<keyword id="KW-0007">Acetylation</keyword>
<keyword id="KW-0009">Actin-binding</keyword>
<keyword id="KW-0877">Alternative promoter usage</keyword>
<keyword id="KW-0025">Alternative splicing</keyword>
<keyword id="KW-0965">Cell junction</keyword>
<keyword id="KW-1003">Cell membrane</keyword>
<keyword id="KW-0966">Cell projection</keyword>
<keyword id="KW-0153">Cholesterol metabolism</keyword>
<keyword id="KW-0963">Cytoplasm</keyword>
<keyword id="KW-0206">Cytoskeleton</keyword>
<keyword id="KW-0440">LIM domain</keyword>
<keyword id="KW-0443">Lipid metabolism</keyword>
<keyword id="KW-0472">Membrane</keyword>
<keyword id="KW-0479">Metal-binding</keyword>
<keyword id="KW-0597">Phosphoprotein</keyword>
<keyword id="KW-1267">Proteomics identification</keyword>
<keyword id="KW-1185">Reference proteome</keyword>
<keyword id="KW-0753">Steroid metabolism</keyword>
<keyword id="KW-1207">Sterol metabolism</keyword>
<keyword id="KW-0832">Ubl conjugation</keyword>
<keyword id="KW-0862">Zinc</keyword>
<name>LIMA1_HUMAN</name>
<dbReference type="EMBL" id="AF198454">
    <property type="protein sequence ID" value="AAF23755.1"/>
    <property type="molecule type" value="mRNA"/>
</dbReference>
<dbReference type="EMBL" id="AF198455">
    <property type="protein sequence ID" value="AAF23756.1"/>
    <property type="molecule type" value="mRNA"/>
</dbReference>
<dbReference type="EMBL" id="AF157325">
    <property type="protein sequence ID" value="AAF67491.1"/>
    <property type="molecule type" value="mRNA"/>
</dbReference>
<dbReference type="EMBL" id="AL136911">
    <property type="protein sequence ID" value="CAB66845.1"/>
    <property type="molecule type" value="mRNA"/>
</dbReference>
<dbReference type="EMBL" id="AK000372">
    <property type="protein sequence ID" value="BAA91120.1"/>
    <property type="status" value="ALT_FRAME"/>
    <property type="molecule type" value="mRNA"/>
</dbReference>
<dbReference type="EMBL" id="AK000335">
    <property type="protein sequence ID" value="BAA91092.1"/>
    <property type="molecule type" value="mRNA"/>
</dbReference>
<dbReference type="EMBL" id="AK023649">
    <property type="protein sequence ID" value="BAB14625.1"/>
    <property type="molecule type" value="mRNA"/>
</dbReference>
<dbReference type="EMBL" id="AK000057">
    <property type="protein sequence ID" value="BAA90914.1"/>
    <property type="molecule type" value="mRNA"/>
</dbReference>
<dbReference type="EMBL" id="AK314447">
    <property type="protein sequence ID" value="BAG37056.1"/>
    <property type="molecule type" value="mRNA"/>
</dbReference>
<dbReference type="EMBL" id="AB209512">
    <property type="protein sequence ID" value="BAD92749.1"/>
    <property type="status" value="ALT_INIT"/>
    <property type="molecule type" value="mRNA"/>
</dbReference>
<dbReference type="EMBL" id="CH471111">
    <property type="protein sequence ID" value="EAW58135.1"/>
    <property type="molecule type" value="Genomic_DNA"/>
</dbReference>
<dbReference type="EMBL" id="BC001247">
    <property type="protein sequence ID" value="AAH01247.2"/>
    <property type="molecule type" value="mRNA"/>
</dbReference>
<dbReference type="EMBL" id="BC010664">
    <property type="protein sequence ID" value="AAH10664.1"/>
    <property type="molecule type" value="mRNA"/>
</dbReference>
<dbReference type="EMBL" id="BC110815">
    <property type="protein sequence ID" value="AAI10816.1"/>
    <property type="molecule type" value="mRNA"/>
</dbReference>
<dbReference type="EMBL" id="BC136763">
    <property type="protein sequence ID" value="AAI36764.1"/>
    <property type="molecule type" value="mRNA"/>
</dbReference>
<dbReference type="EMBL" id="AF218025">
    <property type="protein sequence ID" value="AAG17267.1"/>
    <property type="status" value="ALT_FRAME"/>
    <property type="molecule type" value="mRNA"/>
</dbReference>
<dbReference type="CCDS" id="CCDS44877.1">
    <molecule id="Q9UHB6-4"/>
</dbReference>
<dbReference type="CCDS" id="CCDS55826.1">
    <molecule id="Q9UHB6-5"/>
</dbReference>
<dbReference type="CCDS" id="CCDS58230.1">
    <molecule id="Q9UHB6-3"/>
</dbReference>
<dbReference type="CCDS" id="CCDS8802.1">
    <molecule id="Q9UHB6-1"/>
</dbReference>
<dbReference type="RefSeq" id="NP_001107018.1">
    <molecule id="Q9UHB6-4"/>
    <property type="nucleotide sequence ID" value="NM_001113546.2"/>
</dbReference>
<dbReference type="RefSeq" id="NP_001107019.1">
    <molecule id="Q9UHB6-5"/>
    <property type="nucleotide sequence ID" value="NM_001113547.2"/>
</dbReference>
<dbReference type="RefSeq" id="NP_001230704.1">
    <molecule id="Q9UHB6-3"/>
    <property type="nucleotide sequence ID" value="NM_001243775.2"/>
</dbReference>
<dbReference type="RefSeq" id="NP_001381815.1">
    <molecule id="Q9UHB6-4"/>
    <property type="nucleotide sequence ID" value="NM_001394886.1"/>
</dbReference>
<dbReference type="RefSeq" id="NP_001381816.1">
    <molecule id="Q9UHB6-1"/>
    <property type="nucleotide sequence ID" value="NM_001394887.1"/>
</dbReference>
<dbReference type="RefSeq" id="NP_001381817.1">
    <molecule id="Q9UHB6-1"/>
    <property type="nucleotide sequence ID" value="NM_001394888.1"/>
</dbReference>
<dbReference type="RefSeq" id="NP_057441.1">
    <molecule id="Q9UHB6-1"/>
    <property type="nucleotide sequence ID" value="NM_016357.5"/>
</dbReference>
<dbReference type="RefSeq" id="XP_011536757.1">
    <property type="nucleotide sequence ID" value="XM_011538455.2"/>
</dbReference>
<dbReference type="RefSeq" id="XP_016874919.1">
    <property type="nucleotide sequence ID" value="XM_017019430.1"/>
</dbReference>
<dbReference type="PDB" id="2D8Y">
    <property type="method" value="NMR"/>
    <property type="chains" value="A=381-457"/>
</dbReference>
<dbReference type="PDBsum" id="2D8Y"/>
<dbReference type="SMR" id="Q9UHB6"/>
<dbReference type="BioGRID" id="119559">
    <property type="interactions" value="475"/>
</dbReference>
<dbReference type="DIP" id="DIP-29633N"/>
<dbReference type="FunCoup" id="Q9UHB6">
    <property type="interactions" value="1189"/>
</dbReference>
<dbReference type="IntAct" id="Q9UHB6">
    <property type="interactions" value="260"/>
</dbReference>
<dbReference type="MINT" id="Q9UHB6"/>
<dbReference type="STRING" id="9606.ENSP00000378400"/>
<dbReference type="GlyGen" id="Q9UHB6">
    <property type="glycosylation" value="9 sites, 7 N-linked glycans (1 site), 1 O-linked glycan (8 sites)"/>
</dbReference>
<dbReference type="iPTMnet" id="Q9UHB6"/>
<dbReference type="MetOSite" id="Q9UHB6"/>
<dbReference type="PhosphoSitePlus" id="Q9UHB6"/>
<dbReference type="SwissPalm" id="Q9UHB6"/>
<dbReference type="BioMuta" id="LIMA1"/>
<dbReference type="DMDM" id="20138067"/>
<dbReference type="jPOST" id="Q9UHB6"/>
<dbReference type="MassIVE" id="Q9UHB6"/>
<dbReference type="PaxDb" id="9606-ENSP00000378400"/>
<dbReference type="PeptideAtlas" id="Q9UHB6"/>
<dbReference type="ProteomicsDB" id="84296">
    <molecule id="Q9UHB6-1"/>
</dbReference>
<dbReference type="ProteomicsDB" id="84297">
    <molecule id="Q9UHB6-2"/>
</dbReference>
<dbReference type="ProteomicsDB" id="84298">
    <molecule id="Q9UHB6-3"/>
</dbReference>
<dbReference type="ProteomicsDB" id="84299">
    <molecule id="Q9UHB6-4"/>
</dbReference>
<dbReference type="Pumba" id="Q9UHB6"/>
<dbReference type="Antibodypedia" id="14200">
    <property type="antibodies" value="336 antibodies from 34 providers"/>
</dbReference>
<dbReference type="DNASU" id="51474"/>
<dbReference type="Ensembl" id="ENST00000341247.9">
    <molecule id="Q9UHB6-1"/>
    <property type="protein sequence ID" value="ENSP00000340184.4"/>
    <property type="gene ID" value="ENSG00000050405.14"/>
</dbReference>
<dbReference type="Ensembl" id="ENST00000394943.7">
    <molecule id="Q9UHB6-4"/>
    <property type="protein sequence ID" value="ENSP00000378400.3"/>
    <property type="gene ID" value="ENSG00000050405.14"/>
</dbReference>
<dbReference type="Ensembl" id="ENST00000547825.5">
    <molecule id="Q9UHB6-3"/>
    <property type="protein sequence ID" value="ENSP00000448706.1"/>
    <property type="gene ID" value="ENSG00000050405.14"/>
</dbReference>
<dbReference type="Ensembl" id="ENST00000552783.5">
    <molecule id="Q9UHB6-5"/>
    <property type="protein sequence ID" value="ENSP00000448779.1"/>
    <property type="gene ID" value="ENSG00000050405.14"/>
</dbReference>
<dbReference type="Ensembl" id="ENST00000552823.5">
    <molecule id="Q9UHB6-2"/>
    <property type="protein sequence ID" value="ENSP00000450266.1"/>
    <property type="gene ID" value="ENSG00000050405.14"/>
</dbReference>
<dbReference type="GeneID" id="51474"/>
<dbReference type="KEGG" id="hsa:51474"/>
<dbReference type="MANE-Select" id="ENST00000341247.9">
    <property type="protein sequence ID" value="ENSP00000340184.4"/>
    <property type="RefSeq nucleotide sequence ID" value="NM_016357.5"/>
    <property type="RefSeq protein sequence ID" value="NP_057441.1"/>
</dbReference>
<dbReference type="UCSC" id="uc001rwg.5">
    <molecule id="Q9UHB6-1"/>
    <property type="organism name" value="human"/>
</dbReference>
<dbReference type="AGR" id="HGNC:24636"/>
<dbReference type="CTD" id="51474"/>
<dbReference type="DisGeNET" id="51474"/>
<dbReference type="GeneCards" id="LIMA1"/>
<dbReference type="HGNC" id="HGNC:24636">
    <property type="gene designation" value="LIMA1"/>
</dbReference>
<dbReference type="HPA" id="ENSG00000050405">
    <property type="expression patterns" value="Low tissue specificity"/>
</dbReference>
<dbReference type="MalaCards" id="LIMA1"/>
<dbReference type="MIM" id="608364">
    <property type="type" value="gene"/>
</dbReference>
<dbReference type="MIM" id="618079">
    <property type="type" value="phenotype"/>
</dbReference>
<dbReference type="neXtProt" id="NX_Q9UHB6"/>
<dbReference type="OpenTargets" id="ENSG00000050405"/>
<dbReference type="PharmGKB" id="PA143485527"/>
<dbReference type="VEuPathDB" id="HostDB:ENSG00000050405"/>
<dbReference type="eggNOG" id="KOG1700">
    <property type="taxonomic scope" value="Eukaryota"/>
</dbReference>
<dbReference type="GeneTree" id="ENSGT00940000158313"/>
<dbReference type="HOGENOM" id="CLU_021314_1_0_1"/>
<dbReference type="InParanoid" id="Q9UHB6"/>
<dbReference type="OMA" id="NQQVFHV"/>
<dbReference type="OrthoDB" id="6129702at2759"/>
<dbReference type="PAN-GO" id="Q9UHB6">
    <property type="GO annotations" value="4 GO annotations based on evolutionary models"/>
</dbReference>
<dbReference type="PhylomeDB" id="Q9UHB6"/>
<dbReference type="TreeFam" id="TF350273"/>
<dbReference type="PathwayCommons" id="Q9UHB6"/>
<dbReference type="SignaLink" id="Q9UHB6"/>
<dbReference type="SIGNOR" id="Q9UHB6"/>
<dbReference type="BioGRID-ORCS" id="51474">
    <property type="hits" value="16 hits in 1158 CRISPR screens"/>
</dbReference>
<dbReference type="CD-CODE" id="FB4E32DD">
    <property type="entry name" value="Presynaptic clusters and postsynaptic densities"/>
</dbReference>
<dbReference type="ChiTaRS" id="LIMA1">
    <property type="organism name" value="human"/>
</dbReference>
<dbReference type="EvolutionaryTrace" id="Q9UHB6"/>
<dbReference type="GeneWiki" id="LIMA1"/>
<dbReference type="GenomeRNAi" id="51474"/>
<dbReference type="Pharos" id="Q9UHB6">
    <property type="development level" value="Tbio"/>
</dbReference>
<dbReference type="PRO" id="PR:Q9UHB6"/>
<dbReference type="Proteomes" id="UP000005640">
    <property type="component" value="Chromosome 12"/>
</dbReference>
<dbReference type="RNAct" id="Q9UHB6">
    <property type="molecule type" value="protein"/>
</dbReference>
<dbReference type="Bgee" id="ENSG00000050405">
    <property type="expression patterns" value="Expressed in oocyte and 204 other cell types or tissues"/>
</dbReference>
<dbReference type="ExpressionAtlas" id="Q9UHB6">
    <property type="expression patterns" value="baseline and differential"/>
</dbReference>
<dbReference type="GO" id="GO:0015629">
    <property type="term" value="C:actin cytoskeleton"/>
    <property type="evidence" value="ECO:0000314"/>
    <property type="project" value="LIFEdb"/>
</dbReference>
<dbReference type="GO" id="GO:0005884">
    <property type="term" value="C:actin filament"/>
    <property type="evidence" value="ECO:0000314"/>
    <property type="project" value="UniProtKB"/>
</dbReference>
<dbReference type="GO" id="GO:0031526">
    <property type="term" value="C:brush border membrane"/>
    <property type="evidence" value="ECO:0000250"/>
    <property type="project" value="UniProtKB"/>
</dbReference>
<dbReference type="GO" id="GO:0032154">
    <property type="term" value="C:cleavage furrow"/>
    <property type="evidence" value="ECO:0000314"/>
    <property type="project" value="UniProtKB"/>
</dbReference>
<dbReference type="GO" id="GO:0005829">
    <property type="term" value="C:cytosol"/>
    <property type="evidence" value="ECO:0000314"/>
    <property type="project" value="HPA"/>
</dbReference>
<dbReference type="GO" id="GO:0005925">
    <property type="term" value="C:focal adhesion"/>
    <property type="evidence" value="ECO:0000314"/>
    <property type="project" value="UniProtKB"/>
</dbReference>
<dbReference type="GO" id="GO:0005886">
    <property type="term" value="C:plasma membrane"/>
    <property type="evidence" value="ECO:0000314"/>
    <property type="project" value="HPA"/>
</dbReference>
<dbReference type="GO" id="GO:0001726">
    <property type="term" value="C:ruffle"/>
    <property type="evidence" value="ECO:0000314"/>
    <property type="project" value="UniProtKB"/>
</dbReference>
<dbReference type="GO" id="GO:0001725">
    <property type="term" value="C:stress fiber"/>
    <property type="evidence" value="ECO:0000314"/>
    <property type="project" value="UniProtKB"/>
</dbReference>
<dbReference type="GO" id="GO:0051015">
    <property type="term" value="F:actin filament binding"/>
    <property type="evidence" value="ECO:0000314"/>
    <property type="project" value="UniProtKB"/>
</dbReference>
<dbReference type="GO" id="GO:0003785">
    <property type="term" value="F:actin monomer binding"/>
    <property type="evidence" value="ECO:0000314"/>
    <property type="project" value="UniProtKB"/>
</dbReference>
<dbReference type="GO" id="GO:0045296">
    <property type="term" value="F:cadherin binding"/>
    <property type="evidence" value="ECO:0007005"/>
    <property type="project" value="BHF-UCL"/>
</dbReference>
<dbReference type="GO" id="GO:0046872">
    <property type="term" value="F:metal ion binding"/>
    <property type="evidence" value="ECO:0007669"/>
    <property type="project" value="UniProtKB-KW"/>
</dbReference>
<dbReference type="GO" id="GO:0051017">
    <property type="term" value="P:actin filament bundle assembly"/>
    <property type="evidence" value="ECO:0000314"/>
    <property type="project" value="UniProtKB"/>
</dbReference>
<dbReference type="GO" id="GO:0016477">
    <property type="term" value="P:cell migration"/>
    <property type="evidence" value="ECO:0000250"/>
    <property type="project" value="UniProtKB"/>
</dbReference>
<dbReference type="GO" id="GO:0042632">
    <property type="term" value="P:cholesterol homeostasis"/>
    <property type="evidence" value="ECO:0000250"/>
    <property type="project" value="UniProtKB"/>
</dbReference>
<dbReference type="GO" id="GO:0008203">
    <property type="term" value="P:cholesterol metabolic process"/>
    <property type="evidence" value="ECO:0007669"/>
    <property type="project" value="UniProtKB-KW"/>
</dbReference>
<dbReference type="GO" id="GO:0030299">
    <property type="term" value="P:intestinal cholesterol absorption"/>
    <property type="evidence" value="ECO:0000250"/>
    <property type="project" value="UniProtKB"/>
</dbReference>
<dbReference type="GO" id="GO:0030835">
    <property type="term" value="P:negative regulation of actin filament depolymerization"/>
    <property type="evidence" value="ECO:0000314"/>
    <property type="project" value="UniProtKB"/>
</dbReference>
<dbReference type="GO" id="GO:1902018">
    <property type="term" value="P:negative regulation of cilium assembly"/>
    <property type="evidence" value="ECO:0000315"/>
    <property type="project" value="UniProtKB"/>
</dbReference>
<dbReference type="GO" id="GO:0031529">
    <property type="term" value="P:ruffle organization"/>
    <property type="evidence" value="ECO:0000314"/>
    <property type="project" value="UniProtKB"/>
</dbReference>
<dbReference type="CDD" id="cd09485">
    <property type="entry name" value="LIM_Eplin_alpha_beta"/>
    <property type="match status" value="1"/>
</dbReference>
<dbReference type="FunFam" id="2.10.110.10:FF:000002">
    <property type="entry name" value="LIM domain and actin-binding 1"/>
    <property type="match status" value="1"/>
</dbReference>
<dbReference type="Gene3D" id="2.10.110.10">
    <property type="entry name" value="Cysteine Rich Protein"/>
    <property type="match status" value="1"/>
</dbReference>
<dbReference type="InterPro" id="IPR028740">
    <property type="entry name" value="EPLIN_Lim_dom"/>
</dbReference>
<dbReference type="InterPro" id="IPR001781">
    <property type="entry name" value="Znf_LIM"/>
</dbReference>
<dbReference type="PANTHER" id="PTHR24206">
    <property type="entry name" value="OS06G0237300 PROTEIN"/>
    <property type="match status" value="1"/>
</dbReference>
<dbReference type="Pfam" id="PF00412">
    <property type="entry name" value="LIM"/>
    <property type="match status" value="1"/>
</dbReference>
<dbReference type="SMART" id="SM00132">
    <property type="entry name" value="LIM"/>
    <property type="match status" value="1"/>
</dbReference>
<dbReference type="SUPFAM" id="SSF57716">
    <property type="entry name" value="Glucocorticoid receptor-like (DNA-binding domain)"/>
    <property type="match status" value="2"/>
</dbReference>
<dbReference type="PROSITE" id="PS00478">
    <property type="entry name" value="LIM_DOMAIN_1"/>
    <property type="match status" value="1"/>
</dbReference>
<dbReference type="PROSITE" id="PS50023">
    <property type="entry name" value="LIM_DOMAIN_2"/>
    <property type="match status" value="1"/>
</dbReference>
<accession>Q9UHB6</accession>
<accession>B2RB09</accession>
<accession>Q2TAN7</accession>
<accession>Q59FE8</accession>
<accession>Q9BVF2</accession>
<accession>Q9H8J1</accession>
<accession>Q9HBN5</accession>
<accession>Q9NX96</accession>
<accession>Q9NXC3</accession>
<accession>Q9NXU6</accession>
<accession>Q9P0H8</accession>
<accession>Q9UHB5</accession>
<proteinExistence type="evidence at protein level"/>
<feature type="chain" id="PRO_0000075730" description="LIM domain and actin-binding protein 1">
    <location>
        <begin position="1"/>
        <end position="759"/>
    </location>
</feature>
<feature type="domain" description="LIM zinc-binding" evidence="2">
    <location>
        <begin position="388"/>
        <end position="448"/>
    </location>
</feature>
<feature type="region of interest" description="Disordered" evidence="3">
    <location>
        <begin position="78"/>
        <end position="131"/>
    </location>
</feature>
<feature type="region of interest" description="Disordered" evidence="3">
    <location>
        <begin position="146"/>
        <end position="182"/>
    </location>
</feature>
<feature type="region of interest" description="Disordered" evidence="3">
    <location>
        <begin position="211"/>
        <end position="264"/>
    </location>
</feature>
<feature type="region of interest" description="Disordered" evidence="3">
    <location>
        <begin position="323"/>
        <end position="381"/>
    </location>
</feature>
<feature type="region of interest" description="Required for interaction with MYO5B" evidence="1">
    <location>
        <begin position="493"/>
        <end position="513"/>
    </location>
</feature>
<feature type="region of interest" description="Disordered" evidence="3">
    <location>
        <begin position="509"/>
        <end position="709"/>
    </location>
</feature>
<feature type="short sequence motif" description="Required for interaction with NPC1L1" evidence="1">
    <location>
        <begin position="164"/>
        <end position="166"/>
    </location>
</feature>
<feature type="compositionally biased region" description="Basic and acidic residues" evidence="3">
    <location>
        <begin position="96"/>
        <end position="105"/>
    </location>
</feature>
<feature type="compositionally biased region" description="Basic and acidic residues" evidence="3">
    <location>
        <begin position="146"/>
        <end position="177"/>
    </location>
</feature>
<feature type="compositionally biased region" description="Basic and acidic residues" evidence="3">
    <location>
        <begin position="247"/>
        <end position="258"/>
    </location>
</feature>
<feature type="compositionally biased region" description="Low complexity" evidence="3">
    <location>
        <begin position="362"/>
        <end position="376"/>
    </location>
</feature>
<feature type="compositionally biased region" description="Basic and acidic residues" evidence="3">
    <location>
        <begin position="516"/>
        <end position="527"/>
    </location>
</feature>
<feature type="compositionally biased region" description="Basic and acidic residues" evidence="3">
    <location>
        <begin position="556"/>
        <end position="567"/>
    </location>
</feature>
<feature type="compositionally biased region" description="Polar residues" evidence="3">
    <location>
        <begin position="595"/>
        <end position="607"/>
    </location>
</feature>
<feature type="compositionally biased region" description="Polar residues" evidence="3">
    <location>
        <begin position="644"/>
        <end position="655"/>
    </location>
</feature>
<feature type="compositionally biased region" description="Basic and acidic residues" evidence="3">
    <location>
        <begin position="656"/>
        <end position="673"/>
    </location>
</feature>
<feature type="compositionally biased region" description="Acidic residues" evidence="3">
    <location>
        <begin position="674"/>
        <end position="691"/>
    </location>
</feature>
<feature type="compositionally biased region" description="Polar residues" evidence="3">
    <location>
        <begin position="693"/>
        <end position="709"/>
    </location>
</feature>
<feature type="modified residue" description="N-acetylmethionine" evidence="23">
    <location>
        <position position="1"/>
    </location>
</feature>
<feature type="modified residue" description="Phosphoserine" evidence="23 26">
    <location>
        <position position="4"/>
    </location>
</feature>
<feature type="modified residue" description="Phosphoserine" evidence="20 26">
    <location>
        <position position="15"/>
    </location>
</feature>
<feature type="modified residue" description="Phosphoserine" evidence="26">
    <location>
        <position position="55"/>
    </location>
</feature>
<feature type="modified residue" description="Phosphoserine" evidence="18 23 24 26">
    <location>
        <position position="132"/>
    </location>
</feature>
<feature type="modified residue" description="Phosphoserine" evidence="20 23 27">
    <location>
        <position position="225"/>
    </location>
</feature>
<feature type="modified residue" description="Phosphotyrosine" evidence="20">
    <location>
        <position position="229"/>
    </location>
</feature>
<feature type="modified residue" description="Phosphoserine" evidence="1">
    <location>
        <position position="230"/>
    </location>
</feature>
<feature type="modified residue" description="Phosphoserine" evidence="1">
    <location>
        <position position="242"/>
    </location>
</feature>
<feature type="modified residue" description="Phosphoserine" evidence="23 26">
    <location>
        <position position="263"/>
    </location>
</feature>
<feature type="modified residue" description="Phosphoserine" evidence="23">
    <location>
        <position position="343"/>
    </location>
</feature>
<feature type="modified residue" description="Phosphoserine" evidence="24">
    <location>
        <position position="350"/>
    </location>
</feature>
<feature type="modified residue" description="Phosphoserine" evidence="17 18 20 23 24 26 27">
    <location>
        <position position="362"/>
    </location>
</feature>
<feature type="modified residue" description="Phosphoserine" evidence="24 27">
    <location>
        <position position="365"/>
    </location>
</feature>
<feature type="modified residue" description="Phosphoserine" evidence="24">
    <location>
        <position position="369"/>
    </location>
</feature>
<feature type="modified residue" description="Phosphoserine" evidence="20 23 24 26 27">
    <location>
        <position position="374"/>
    </location>
</feature>
<feature type="modified residue" description="N6-succinyllysine" evidence="1">
    <location>
        <position position="439"/>
    </location>
</feature>
<feature type="modified residue" description="Phosphoserine" evidence="17 18 19 20 21 23 24 26 27">
    <location>
        <position position="490"/>
    </location>
</feature>
<feature type="modified residue" description="Phosphoserine" evidence="26">
    <location>
        <position position="601"/>
    </location>
</feature>
<feature type="modified residue" description="Phosphoserine" evidence="20 22 23 26">
    <location>
        <position position="604"/>
    </location>
</feature>
<feature type="modified residue" description="Phosphoserine" evidence="20 26">
    <location>
        <position position="609"/>
    </location>
</feature>
<feature type="modified residue" description="Phosphoserine" evidence="20 22 26">
    <location>
        <position position="617"/>
    </location>
</feature>
<feature type="modified residue" description="Phosphoserine" evidence="17 20 21 22 23 24 26">
    <location>
        <position position="686"/>
    </location>
</feature>
<feature type="modified residue" description="Phosphoserine" evidence="17 20 21 23">
    <location>
        <position position="692"/>
    </location>
</feature>
<feature type="modified residue" description="Phosphoserine" evidence="20 24">
    <location>
        <position position="698"/>
    </location>
</feature>
<feature type="modified residue" description="Phosphoserine" evidence="24">
    <location>
        <position position="726"/>
    </location>
</feature>
<feature type="modified residue" description="Phosphoserine" evidence="1">
    <location>
        <position position="741"/>
    </location>
</feature>
<feature type="splice variant" id="VSP_003117" description="In isoform 3." evidence="12 13">
    <location>
        <begin position="1"/>
        <end position="302"/>
    </location>
</feature>
<feature type="splice variant" id="VSP_003116" description="In isoform Alpha and isoform 5." evidence="11 13">
    <location>
        <begin position="1"/>
        <end position="160"/>
    </location>
</feature>
<feature type="splice variant" id="VSP_040136" description="In isoform 4 and isoform 5." evidence="12 14">
    <original>R</original>
    <variation>PG</variation>
    <location>
        <position position="344"/>
    </location>
</feature>
<feature type="sequence variant" id="VAR_080864" description="Correlated with lower plasma levels of low-density lipoprotein cholesterol; reduces protein stability; dbSNP:rs140372565." evidence="8">
    <original>L</original>
    <variation>I</variation>
    <location>
        <position position="25"/>
    </location>
</feature>
<feature type="sequence conflict" description="In Ref. 4; BAA90914 and 7; AAH01247." evidence="15" ref="4 7">
    <location>
        <position position="381"/>
    </location>
</feature>
<feature type="sequence conflict" description="In Ref. 8; AAG17267." evidence="15" ref="8">
    <original>F</original>
    <variation>L</variation>
    <location>
        <position position="415"/>
    </location>
</feature>
<feature type="sequence conflict" description="In Ref. 4; BAA90914." evidence="15" ref="4">
    <original>D</original>
    <variation>G</variation>
    <location>
        <position position="463"/>
    </location>
</feature>
<feature type="sequence conflict" description="In Ref. 2; AAF67491." evidence="15" ref="2">
    <original>P</original>
    <variation>Q</variation>
    <location>
        <position position="491"/>
    </location>
</feature>
<feature type="sequence conflict" description="In Ref. 2; AAF67491." evidence="15" ref="2">
    <original>DK</original>
    <variation>NR</variation>
    <location>
        <begin position="520"/>
        <end position="521"/>
    </location>
</feature>
<feature type="strand" evidence="28">
    <location>
        <begin position="384"/>
        <end position="387"/>
    </location>
</feature>
<feature type="turn" evidence="28">
    <location>
        <begin position="391"/>
        <end position="393"/>
    </location>
</feature>
<feature type="strand" evidence="28">
    <location>
        <begin position="401"/>
        <end position="404"/>
    </location>
</feature>
<feature type="strand" evidence="28">
    <location>
        <begin position="406"/>
        <end position="411"/>
    </location>
</feature>
<feature type="turn" evidence="28">
    <location>
        <begin position="412"/>
        <end position="414"/>
    </location>
</feature>
<feature type="turn" evidence="28">
    <location>
        <begin position="418"/>
        <end position="420"/>
    </location>
</feature>
<feature type="turn" evidence="28">
    <location>
        <begin position="426"/>
        <end position="428"/>
    </location>
</feature>
<feature type="strand" evidence="28">
    <location>
        <begin position="432"/>
        <end position="434"/>
    </location>
</feature>
<feature type="helix" evidence="28">
    <location>
        <begin position="439"/>
        <end position="445"/>
    </location>
</feature>
<feature type="modified residue" description="N-acetylmethionine" evidence="25">
    <location sequence="Q9UHB6-2">
        <position position="1"/>
    </location>
</feature>
<feature type="modified residue" description="Phosphoserine" evidence="23">
    <location sequence="Q9UHB6-4">
        <position position="343"/>
    </location>
</feature>
<feature type="modified residue" description="N-acetylmethionine" evidence="25">
    <location sequence="Q9UHB6-5">
        <position position="1"/>
    </location>
</feature>
<feature type="modified residue" description="Phosphoserine" evidence="23">
    <location sequence="Q9UHB6-5">
        <position position="183"/>
    </location>
</feature>
<evidence type="ECO:0000250" key="1">
    <source>
        <dbReference type="UniProtKB" id="Q9ERG0"/>
    </source>
</evidence>
<evidence type="ECO:0000255" key="2">
    <source>
        <dbReference type="PROSITE-ProRule" id="PRU00125"/>
    </source>
</evidence>
<evidence type="ECO:0000256" key="3">
    <source>
        <dbReference type="SAM" id="MobiDB-lite"/>
    </source>
</evidence>
<evidence type="ECO:0000269" key="4">
    <source>
    </source>
</evidence>
<evidence type="ECO:0000269" key="5">
    <source>
    </source>
</evidence>
<evidence type="ECO:0000269" key="6">
    <source>
    </source>
</evidence>
<evidence type="ECO:0000269" key="7">
    <source>
    </source>
</evidence>
<evidence type="ECO:0000269" key="8">
    <source>
    </source>
</evidence>
<evidence type="ECO:0000269" key="9">
    <source>
    </source>
</evidence>
<evidence type="ECO:0000269" key="10">
    <source>
    </source>
</evidence>
<evidence type="ECO:0000303" key="11">
    <source>
    </source>
</evidence>
<evidence type="ECO:0000303" key="12">
    <source>
    </source>
</evidence>
<evidence type="ECO:0000303" key="13">
    <source>
    </source>
</evidence>
<evidence type="ECO:0000303" key="14">
    <source ref="5"/>
</evidence>
<evidence type="ECO:0000305" key="15"/>
<evidence type="ECO:0000312" key="16">
    <source>
        <dbReference type="HGNC" id="HGNC:24636"/>
    </source>
</evidence>
<evidence type="ECO:0007744" key="17">
    <source>
    </source>
</evidence>
<evidence type="ECO:0007744" key="18">
    <source>
    </source>
</evidence>
<evidence type="ECO:0007744" key="19">
    <source>
    </source>
</evidence>
<evidence type="ECO:0007744" key="20">
    <source>
    </source>
</evidence>
<evidence type="ECO:0007744" key="21">
    <source>
    </source>
</evidence>
<evidence type="ECO:0007744" key="22">
    <source>
    </source>
</evidence>
<evidence type="ECO:0007744" key="23">
    <source>
    </source>
</evidence>
<evidence type="ECO:0007744" key="24">
    <source>
    </source>
</evidence>
<evidence type="ECO:0007744" key="25">
    <source>
    </source>
</evidence>
<evidence type="ECO:0007744" key="26">
    <source>
    </source>
</evidence>
<evidence type="ECO:0007744" key="27">
    <source>
    </source>
</evidence>
<evidence type="ECO:0007829" key="28">
    <source>
        <dbReference type="PDB" id="2D8Y"/>
    </source>
</evidence>
<sequence>MESSPFNRRQWTSLSLRVTAKELSLVNKNKSSAIVEIFSKYQKAAEETNMEKKRSNTENLSQHFRKGTLTVLKKKWENPGLGAESHTDSLRNSSTEIRHRADHPPAEVTSHAASGAKADQEEQIHPRSRLRSPPEALVQGRYPHIKDGEDLKDHSTESKKMENCLGESRHEVEKSEISENTDASGKIEKYNVPLNRLKMMFEKGEPTQTKILRAQSRSASGRKISENSYSLDDLEIGPGQLSSSTFDSEKNESRRNLELPRLSETSIKDRMAKYQAAVSKQSSSTNYTNELKASGGEIKIHKMEQKENVPPGPEVCITHQEGEKISANENSLAVRSTPAEDDSRDSQVKSEVQQPVHPKPLSPDSRASSLSESSPPKAMKKFQAPARETCVECQKTVYPMERLLANQQVFHISCFRCSYCNNKLSLGTYASLHGRIYCKPHFNQLFKSKGNYDEGFGHRPHKDLWASKNENEEILERPAQLANARETPHSPGVEDAPIAKVGVLAASMEAKASSQQEKEDKPAETKKLRIAWPPPTELGSSGSALEEGIKMSKPKWPPEDEISKPEVPEDVDLDLKKLRRSSSLKERSRPFTVAASFQSTSVKSPKTVSPPIRKGWSMSEQSEESVGGRVAERKQVENAKASKKNGNVGKTTWQNKESKGETGKRSKEGHSLEMENENLVENGADSDEDDNSFLKQQSPQEPKSLNWSSFVDNTFAEEFTTQNQKSQDVELWEGEVVKELSVEEQIKRNRYYDEDEDEE</sequence>